<protein>
    <recommendedName>
        <fullName>Translationally-controlled tumor protein homolog</fullName>
        <shortName>TCTP</shortName>
    </recommendedName>
</protein>
<name>TCTP_CROHD</name>
<evidence type="ECO:0000250" key="1"/>
<evidence type="ECO:0000255" key="2">
    <source>
        <dbReference type="PROSITE-ProRule" id="PRU01133"/>
    </source>
</evidence>
<reference key="1">
    <citation type="journal article" date="2013" name="BMC Genomics">
        <title>The genesis of an exceptionally lethal venom in the timber rattlesnake (Crotalus horridus) revealed through comparative venom-gland transcriptomics.</title>
        <authorList>
            <person name="Rokyta D.R."/>
            <person name="Wray K.P."/>
            <person name="Margres M.J."/>
        </authorList>
    </citation>
    <scope>NUCLEOTIDE SEQUENCE [LARGE SCALE MRNA]</scope>
    <source>
        <tissue>Venom gland</tissue>
    </source>
</reference>
<keyword id="KW-0964">Secreted</keyword>
<proteinExistence type="evidence at transcript level"/>
<organism>
    <name type="scientific">Crotalus horridus</name>
    <name type="common">Timber rattlesnake</name>
    <dbReference type="NCBI Taxonomy" id="35024"/>
    <lineage>
        <taxon>Eukaryota</taxon>
        <taxon>Metazoa</taxon>
        <taxon>Chordata</taxon>
        <taxon>Craniata</taxon>
        <taxon>Vertebrata</taxon>
        <taxon>Euteleostomi</taxon>
        <taxon>Lepidosauria</taxon>
        <taxon>Squamata</taxon>
        <taxon>Bifurcata</taxon>
        <taxon>Unidentata</taxon>
        <taxon>Episquamata</taxon>
        <taxon>Toxicofera</taxon>
        <taxon>Serpentes</taxon>
        <taxon>Colubroidea</taxon>
        <taxon>Viperidae</taxon>
        <taxon>Crotalinae</taxon>
        <taxon>Crotalus</taxon>
    </lineage>
</organism>
<comment type="function">
    <text evidence="1">Venom protein that causes edema, enhances vascular permeability and is likely related to the inflammatory activity of the venom.</text>
</comment>
<comment type="subcellular location">
    <subcellularLocation>
        <location evidence="1">Secreted</location>
    </subcellularLocation>
</comment>
<comment type="tissue specificity">
    <text>Expressed by the venom gland.</text>
</comment>
<comment type="miscellaneous">
    <text evidence="1">Secretion of this protein from cells may proceed via an ER/Golgi-independent pathway, probably mediated by secreted vesicles called exosomes.</text>
</comment>
<comment type="similarity">
    <text evidence="2">Belongs to the TCTP family.</text>
</comment>
<sequence length="172" mass="19433">MIIYRDCISQDEMFSDIYKITEVANGLCLEVEGKMVSRKEGEIDDALIGGNASAEGPEGDGTEATVITGVDIVMNHHLQETSFTKESYKKYIKDYMKSIKARLEETKPERVKPFMTGAAEQVKHILGNFKNYQFFVGENMNPDGMVGLLDFREDGVTPYMIFFKDGLEMEKC</sequence>
<feature type="chain" id="PRO_0000429460" description="Translationally-controlled tumor protein homolog">
    <location>
        <begin position="1"/>
        <end position="172"/>
    </location>
</feature>
<feature type="domain" description="TCTP" evidence="2">
    <location>
        <begin position="1"/>
        <end position="172"/>
    </location>
</feature>
<dbReference type="EMBL" id="GAAZ01002497">
    <property type="protein sequence ID" value="JAA95446.1"/>
    <property type="molecule type" value="mRNA"/>
</dbReference>
<dbReference type="SMR" id="T1DKS4"/>
<dbReference type="GO" id="GO:0005737">
    <property type="term" value="C:cytoplasm"/>
    <property type="evidence" value="ECO:0007669"/>
    <property type="project" value="TreeGrafter"/>
</dbReference>
<dbReference type="GO" id="GO:0005576">
    <property type="term" value="C:extracellular region"/>
    <property type="evidence" value="ECO:0007669"/>
    <property type="project" value="UniProtKB-SubCell"/>
</dbReference>
<dbReference type="GO" id="GO:0005509">
    <property type="term" value="F:calcium ion binding"/>
    <property type="evidence" value="ECO:0007669"/>
    <property type="project" value="TreeGrafter"/>
</dbReference>
<dbReference type="FunFam" id="2.170.150.10:FF:000001">
    <property type="entry name" value="Tumor protein, translationally-controlled 1"/>
    <property type="match status" value="1"/>
</dbReference>
<dbReference type="Gene3D" id="2.170.150.10">
    <property type="entry name" value="Metal Binding Protein, Guanine Nucleotide Exchange Factor, Chain A"/>
    <property type="match status" value="1"/>
</dbReference>
<dbReference type="InterPro" id="IPR011057">
    <property type="entry name" value="Mss4-like_sf"/>
</dbReference>
<dbReference type="InterPro" id="IPR011323">
    <property type="entry name" value="Mss4/transl-control_tumour"/>
</dbReference>
<dbReference type="InterPro" id="IPR034737">
    <property type="entry name" value="TCTP"/>
</dbReference>
<dbReference type="InterPro" id="IPR018103">
    <property type="entry name" value="Translation_control_tumour_CS"/>
</dbReference>
<dbReference type="InterPro" id="IPR018105">
    <property type="entry name" value="Translational_control_tumour_p"/>
</dbReference>
<dbReference type="PANTHER" id="PTHR11991">
    <property type="entry name" value="TRANSLATIONALLY CONTROLLED TUMOR PROTEIN-RELATED"/>
    <property type="match status" value="1"/>
</dbReference>
<dbReference type="PANTHER" id="PTHR11991:SF0">
    <property type="entry name" value="TRANSLATIONALLY-CONTROLLED TUMOR PROTEIN"/>
    <property type="match status" value="1"/>
</dbReference>
<dbReference type="Pfam" id="PF00838">
    <property type="entry name" value="TCTP"/>
    <property type="match status" value="1"/>
</dbReference>
<dbReference type="PRINTS" id="PR01653">
    <property type="entry name" value="TCTPROTEIN"/>
</dbReference>
<dbReference type="SUPFAM" id="SSF51316">
    <property type="entry name" value="Mss4-like"/>
    <property type="match status" value="1"/>
</dbReference>
<dbReference type="PROSITE" id="PS01002">
    <property type="entry name" value="TCTP_1"/>
    <property type="match status" value="1"/>
</dbReference>
<dbReference type="PROSITE" id="PS01003">
    <property type="entry name" value="TCTP_2"/>
    <property type="match status" value="1"/>
</dbReference>
<dbReference type="PROSITE" id="PS51797">
    <property type="entry name" value="TCTP_3"/>
    <property type="match status" value="1"/>
</dbReference>
<accession>T1DKS4</accession>